<proteinExistence type="inferred from homology"/>
<sequence>MGKIIGIDLGTTNSCVYIMEGKDPKCITNPEGGRTTPSVVGFTDKERLVGDIAKRQAVTNPERTVFAIKRLMGRKADAPEVARWKEHSPYQIVAGPNGDAYVEIEGRKYSPAEVSAMVLAKLKADAEAYLGETVTEAVITVPAYFNDSQRQSTKDAGRIAGLDVKRIINEPTAASLAYGFDKKANEKIAVFDLGGGTFDISILEVGDNVVEVRATNGDTFLGGEDFDQRVINYLVEEFRRENGIDLSRDRMALQRLKEAAEKAKKDLSTSMETEINLPFITADQTGPKHLMIKLSRAKLEKLVEDLVERTIEPCRKALSDAGLSASEVDEVVLVGGMTRMPLVQKKVADFFGKEPNRSMNPDEVVSMGAAIQGGILAGDVKDVLLLDVTPLSLGIETLGGVFTRLIERNTTIPTKKSQTFTTAADNQPSVSIHVMQGERPMASDNMTLGRFELTGIPAAPRGMPQIEVSFDIDANGIVNVSAKDLGTGKEQSIRITASSGLSEDEIQNLVKEAEAHADEDKKKKELIEARNQADSLIYTTEKSLSDLGDKLEADLKKEIEDKTAALKTAMEGSDVDAIKKATDELSQASHKLAEKLYAQQQAGAQGAAGAEAGAGDAGAKASQDEDVVDADYTEVKN</sequence>
<comment type="function">
    <text evidence="1">Acts as a chaperone.</text>
</comment>
<comment type="induction">
    <text evidence="1">By stress conditions e.g. heat shock.</text>
</comment>
<comment type="similarity">
    <text evidence="1">Belongs to the heat shock protein 70 family.</text>
</comment>
<accession>Q313S2</accession>
<keyword id="KW-0067">ATP-binding</keyword>
<keyword id="KW-0143">Chaperone</keyword>
<keyword id="KW-0547">Nucleotide-binding</keyword>
<keyword id="KW-0597">Phosphoprotein</keyword>
<keyword id="KW-1185">Reference proteome</keyword>
<keyword id="KW-0346">Stress response</keyword>
<protein>
    <recommendedName>
        <fullName evidence="1">Chaperone protein DnaK</fullName>
    </recommendedName>
    <alternativeName>
        <fullName evidence="1">HSP70</fullName>
    </alternativeName>
    <alternativeName>
        <fullName evidence="1">Heat shock 70 kDa protein</fullName>
    </alternativeName>
    <alternativeName>
        <fullName evidence="1">Heat shock protein 70</fullName>
    </alternativeName>
</protein>
<evidence type="ECO:0000255" key="1">
    <source>
        <dbReference type="HAMAP-Rule" id="MF_00332"/>
    </source>
</evidence>
<evidence type="ECO:0000256" key="2">
    <source>
        <dbReference type="SAM" id="MobiDB-lite"/>
    </source>
</evidence>
<gene>
    <name evidence="1" type="primary">dnaK</name>
    <name type="ordered locus">Dde_1023</name>
</gene>
<feature type="chain" id="PRO_0000225959" description="Chaperone protein DnaK">
    <location>
        <begin position="1"/>
        <end position="637"/>
    </location>
</feature>
<feature type="region of interest" description="Disordered" evidence="2">
    <location>
        <begin position="600"/>
        <end position="637"/>
    </location>
</feature>
<feature type="compositionally biased region" description="Low complexity" evidence="2">
    <location>
        <begin position="600"/>
        <end position="621"/>
    </location>
</feature>
<feature type="compositionally biased region" description="Acidic residues" evidence="2">
    <location>
        <begin position="624"/>
        <end position="637"/>
    </location>
</feature>
<feature type="modified residue" description="Phosphothreonine; by autocatalysis" evidence="1">
    <location>
        <position position="197"/>
    </location>
</feature>
<reference key="1">
    <citation type="journal article" date="2011" name="J. Bacteriol.">
        <title>Complete genome sequence and updated annotation of Desulfovibrio alaskensis G20.</title>
        <authorList>
            <person name="Hauser L.J."/>
            <person name="Land M.L."/>
            <person name="Brown S.D."/>
            <person name="Larimer F."/>
            <person name="Keller K.L."/>
            <person name="Rapp-Giles B.J."/>
            <person name="Price M.N."/>
            <person name="Lin M."/>
            <person name="Bruce D.C."/>
            <person name="Detter J.C."/>
            <person name="Tapia R."/>
            <person name="Han C.S."/>
            <person name="Goodwin L.A."/>
            <person name="Cheng J.F."/>
            <person name="Pitluck S."/>
            <person name="Copeland A."/>
            <person name="Lucas S."/>
            <person name="Nolan M."/>
            <person name="Lapidus A.L."/>
            <person name="Palumbo A.V."/>
            <person name="Wall J.D."/>
        </authorList>
    </citation>
    <scope>NUCLEOTIDE SEQUENCE [LARGE SCALE GENOMIC DNA]</scope>
    <source>
        <strain>ATCC BAA-1058 / DSM 17464 / G20</strain>
    </source>
</reference>
<organism>
    <name type="scientific">Oleidesulfovibrio alaskensis (strain ATCC BAA-1058 / DSM 17464 / G20)</name>
    <name type="common">Desulfovibrio alaskensis</name>
    <dbReference type="NCBI Taxonomy" id="207559"/>
    <lineage>
        <taxon>Bacteria</taxon>
        <taxon>Pseudomonadati</taxon>
        <taxon>Thermodesulfobacteriota</taxon>
        <taxon>Desulfovibrionia</taxon>
        <taxon>Desulfovibrionales</taxon>
        <taxon>Desulfovibrionaceae</taxon>
        <taxon>Oleidesulfovibrio</taxon>
    </lineage>
</organism>
<dbReference type="EMBL" id="CP000112">
    <property type="protein sequence ID" value="ABB37824.1"/>
    <property type="molecule type" value="Genomic_DNA"/>
</dbReference>
<dbReference type="RefSeq" id="WP_011367061.1">
    <property type="nucleotide sequence ID" value="NC_007519.1"/>
</dbReference>
<dbReference type="SMR" id="Q313S2"/>
<dbReference type="STRING" id="207559.Dde_1023"/>
<dbReference type="KEGG" id="dde:Dde_1023"/>
<dbReference type="eggNOG" id="COG0443">
    <property type="taxonomic scope" value="Bacteria"/>
</dbReference>
<dbReference type="HOGENOM" id="CLU_005965_2_1_7"/>
<dbReference type="Proteomes" id="UP000002710">
    <property type="component" value="Chromosome"/>
</dbReference>
<dbReference type="GO" id="GO:0005524">
    <property type="term" value="F:ATP binding"/>
    <property type="evidence" value="ECO:0007669"/>
    <property type="project" value="UniProtKB-UniRule"/>
</dbReference>
<dbReference type="GO" id="GO:0140662">
    <property type="term" value="F:ATP-dependent protein folding chaperone"/>
    <property type="evidence" value="ECO:0007669"/>
    <property type="project" value="InterPro"/>
</dbReference>
<dbReference type="GO" id="GO:0051082">
    <property type="term" value="F:unfolded protein binding"/>
    <property type="evidence" value="ECO:0007669"/>
    <property type="project" value="InterPro"/>
</dbReference>
<dbReference type="CDD" id="cd10234">
    <property type="entry name" value="ASKHA_NBD_HSP70_DnaK-like"/>
    <property type="match status" value="1"/>
</dbReference>
<dbReference type="FunFam" id="2.60.34.10:FF:000014">
    <property type="entry name" value="Chaperone protein DnaK HSP70"/>
    <property type="match status" value="1"/>
</dbReference>
<dbReference type="FunFam" id="1.20.1270.10:FF:000001">
    <property type="entry name" value="Molecular chaperone DnaK"/>
    <property type="match status" value="1"/>
</dbReference>
<dbReference type="FunFam" id="3.30.420.40:FF:000004">
    <property type="entry name" value="Molecular chaperone DnaK"/>
    <property type="match status" value="1"/>
</dbReference>
<dbReference type="FunFam" id="3.90.640.10:FF:000003">
    <property type="entry name" value="Molecular chaperone DnaK"/>
    <property type="match status" value="1"/>
</dbReference>
<dbReference type="Gene3D" id="1.20.1270.10">
    <property type="match status" value="1"/>
</dbReference>
<dbReference type="Gene3D" id="3.30.420.40">
    <property type="match status" value="2"/>
</dbReference>
<dbReference type="Gene3D" id="3.90.640.10">
    <property type="entry name" value="Actin, Chain A, domain 4"/>
    <property type="match status" value="1"/>
</dbReference>
<dbReference type="Gene3D" id="2.60.34.10">
    <property type="entry name" value="Substrate Binding Domain Of DNAk, Chain A, domain 1"/>
    <property type="match status" value="1"/>
</dbReference>
<dbReference type="HAMAP" id="MF_00332">
    <property type="entry name" value="DnaK"/>
    <property type="match status" value="1"/>
</dbReference>
<dbReference type="InterPro" id="IPR043129">
    <property type="entry name" value="ATPase_NBD"/>
</dbReference>
<dbReference type="InterPro" id="IPR012725">
    <property type="entry name" value="Chaperone_DnaK"/>
</dbReference>
<dbReference type="InterPro" id="IPR018181">
    <property type="entry name" value="Heat_shock_70_CS"/>
</dbReference>
<dbReference type="InterPro" id="IPR029048">
    <property type="entry name" value="HSP70_C_sf"/>
</dbReference>
<dbReference type="InterPro" id="IPR029047">
    <property type="entry name" value="HSP70_peptide-bd_sf"/>
</dbReference>
<dbReference type="InterPro" id="IPR013126">
    <property type="entry name" value="Hsp_70_fam"/>
</dbReference>
<dbReference type="NCBIfam" id="NF001413">
    <property type="entry name" value="PRK00290.1"/>
    <property type="match status" value="1"/>
</dbReference>
<dbReference type="NCBIfam" id="NF003520">
    <property type="entry name" value="PRK05183.1"/>
    <property type="match status" value="1"/>
</dbReference>
<dbReference type="NCBIfam" id="TIGR02350">
    <property type="entry name" value="prok_dnaK"/>
    <property type="match status" value="1"/>
</dbReference>
<dbReference type="PANTHER" id="PTHR19375">
    <property type="entry name" value="HEAT SHOCK PROTEIN 70KDA"/>
    <property type="match status" value="1"/>
</dbReference>
<dbReference type="Pfam" id="PF00012">
    <property type="entry name" value="HSP70"/>
    <property type="match status" value="1"/>
</dbReference>
<dbReference type="PRINTS" id="PR00301">
    <property type="entry name" value="HEATSHOCK70"/>
</dbReference>
<dbReference type="SUPFAM" id="SSF53067">
    <property type="entry name" value="Actin-like ATPase domain"/>
    <property type="match status" value="2"/>
</dbReference>
<dbReference type="SUPFAM" id="SSF100934">
    <property type="entry name" value="Heat shock protein 70kD (HSP70), C-terminal subdomain"/>
    <property type="match status" value="1"/>
</dbReference>
<dbReference type="SUPFAM" id="SSF100920">
    <property type="entry name" value="Heat shock protein 70kD (HSP70), peptide-binding domain"/>
    <property type="match status" value="1"/>
</dbReference>
<dbReference type="PROSITE" id="PS00297">
    <property type="entry name" value="HSP70_1"/>
    <property type="match status" value="1"/>
</dbReference>
<dbReference type="PROSITE" id="PS00329">
    <property type="entry name" value="HSP70_2"/>
    <property type="match status" value="1"/>
</dbReference>
<dbReference type="PROSITE" id="PS01036">
    <property type="entry name" value="HSP70_3"/>
    <property type="match status" value="1"/>
</dbReference>
<name>DNAK_OLEA2</name>